<dbReference type="EC" id="3.4.11.1"/>
<dbReference type="EC" id="3.4.11.5"/>
<dbReference type="EMBL" id="AL022198">
    <property type="protein sequence ID" value="CAA18202.1"/>
    <property type="status" value="ALT_SEQ"/>
    <property type="molecule type" value="Genomic_DNA"/>
</dbReference>
<dbReference type="EMBL" id="AL161577">
    <property type="protein sequence ID" value="CAB79809.1"/>
    <property type="status" value="ALT_SEQ"/>
    <property type="molecule type" value="Genomic_DNA"/>
</dbReference>
<dbReference type="EMBL" id="CP002687">
    <property type="protein sequence ID" value="AEE85829.1"/>
    <property type="molecule type" value="Genomic_DNA"/>
</dbReference>
<dbReference type="EMBL" id="AY090346">
    <property type="protein sequence ID" value="AAL91252.1"/>
    <property type="molecule type" value="mRNA"/>
</dbReference>
<dbReference type="EMBL" id="AY125537">
    <property type="protein sequence ID" value="AAM78047.1"/>
    <property type="molecule type" value="mRNA"/>
</dbReference>
<dbReference type="PIR" id="H85361">
    <property type="entry name" value="H85361"/>
</dbReference>
<dbReference type="RefSeq" id="NP_194820.1">
    <property type="nucleotide sequence ID" value="NM_119238.5"/>
</dbReference>
<dbReference type="SMR" id="Q8RX72"/>
<dbReference type="BioGRID" id="14502">
    <property type="interactions" value="7"/>
</dbReference>
<dbReference type="FunCoup" id="Q8RX72">
    <property type="interactions" value="1363"/>
</dbReference>
<dbReference type="STRING" id="3702.Q8RX72"/>
<dbReference type="MEROPS" id="M17.A02"/>
<dbReference type="GlyGen" id="Q8RX72">
    <property type="glycosylation" value="1 site"/>
</dbReference>
<dbReference type="iPTMnet" id="Q8RX72"/>
<dbReference type="PaxDb" id="3702-AT4G30910.1"/>
<dbReference type="ProteomicsDB" id="245050"/>
<dbReference type="EnsemblPlants" id="AT4G30910.1">
    <property type="protein sequence ID" value="AT4G30910.1"/>
    <property type="gene ID" value="AT4G30910"/>
</dbReference>
<dbReference type="GeneID" id="829215"/>
<dbReference type="Gramene" id="AT4G30910.1">
    <property type="protein sequence ID" value="AT4G30910.1"/>
    <property type="gene ID" value="AT4G30910"/>
</dbReference>
<dbReference type="KEGG" id="ath:AT4G30910"/>
<dbReference type="Araport" id="AT4G30910"/>
<dbReference type="TAIR" id="AT4G30910"/>
<dbReference type="eggNOG" id="KOG2597">
    <property type="taxonomic scope" value="Eukaryota"/>
</dbReference>
<dbReference type="HOGENOM" id="CLU_013734_5_1_1"/>
<dbReference type="InParanoid" id="Q8RX72"/>
<dbReference type="PhylomeDB" id="Q8RX72"/>
<dbReference type="PRO" id="PR:Q8RX72"/>
<dbReference type="Proteomes" id="UP000006548">
    <property type="component" value="Chromosome 4"/>
</dbReference>
<dbReference type="ExpressionAtlas" id="Q8RX72">
    <property type="expression patterns" value="baseline and differential"/>
</dbReference>
<dbReference type="GO" id="GO:0009507">
    <property type="term" value="C:chloroplast"/>
    <property type="evidence" value="ECO:0007005"/>
    <property type="project" value="TAIR"/>
</dbReference>
<dbReference type="GO" id="GO:0009570">
    <property type="term" value="C:chloroplast stroma"/>
    <property type="evidence" value="ECO:0007005"/>
    <property type="project" value="TAIR"/>
</dbReference>
<dbReference type="GO" id="GO:0005886">
    <property type="term" value="C:plasma membrane"/>
    <property type="evidence" value="ECO:0007005"/>
    <property type="project" value="TAIR"/>
</dbReference>
<dbReference type="GO" id="GO:0016805">
    <property type="term" value="F:dipeptidase activity"/>
    <property type="evidence" value="ECO:0000314"/>
    <property type="project" value="UniProtKB"/>
</dbReference>
<dbReference type="GO" id="GO:0000287">
    <property type="term" value="F:magnesium ion binding"/>
    <property type="evidence" value="ECO:0000250"/>
    <property type="project" value="UniProtKB"/>
</dbReference>
<dbReference type="GO" id="GO:0030145">
    <property type="term" value="F:manganese ion binding"/>
    <property type="evidence" value="ECO:0007669"/>
    <property type="project" value="InterPro"/>
</dbReference>
<dbReference type="GO" id="GO:0070006">
    <property type="term" value="F:metalloaminopeptidase activity"/>
    <property type="evidence" value="ECO:0007669"/>
    <property type="project" value="InterPro"/>
</dbReference>
<dbReference type="GO" id="GO:0006508">
    <property type="term" value="P:proteolysis"/>
    <property type="evidence" value="ECO:0007669"/>
    <property type="project" value="UniProtKB-KW"/>
</dbReference>
<dbReference type="CDD" id="cd00433">
    <property type="entry name" value="Peptidase_M17"/>
    <property type="match status" value="1"/>
</dbReference>
<dbReference type="FunFam" id="3.40.220.10:FF:000011">
    <property type="entry name" value="Leucine aminopeptidase 2, chloroplastic"/>
    <property type="match status" value="1"/>
</dbReference>
<dbReference type="FunFam" id="3.40.630.10:FF:000033">
    <property type="entry name" value="M17 leucyl aminopeptidase"/>
    <property type="match status" value="1"/>
</dbReference>
<dbReference type="Gene3D" id="3.40.220.10">
    <property type="entry name" value="Leucine Aminopeptidase, subunit E, domain 1"/>
    <property type="match status" value="1"/>
</dbReference>
<dbReference type="Gene3D" id="3.40.630.10">
    <property type="entry name" value="Zn peptidases"/>
    <property type="match status" value="1"/>
</dbReference>
<dbReference type="HAMAP" id="MF_00181">
    <property type="entry name" value="Cytosol_peptidase_M17"/>
    <property type="match status" value="1"/>
</dbReference>
<dbReference type="InterPro" id="IPR011356">
    <property type="entry name" value="Leucine_aapep/pepB"/>
</dbReference>
<dbReference type="InterPro" id="IPR043472">
    <property type="entry name" value="Macro_dom-like"/>
</dbReference>
<dbReference type="InterPro" id="IPR000819">
    <property type="entry name" value="Peptidase_M17_C"/>
</dbReference>
<dbReference type="InterPro" id="IPR023042">
    <property type="entry name" value="Peptidase_M17_leu_NH2_pept"/>
</dbReference>
<dbReference type="InterPro" id="IPR008283">
    <property type="entry name" value="Peptidase_M17_N"/>
</dbReference>
<dbReference type="NCBIfam" id="NF002076">
    <property type="entry name" value="PRK00913.2-3"/>
    <property type="match status" value="1"/>
</dbReference>
<dbReference type="PANTHER" id="PTHR11963:SF23">
    <property type="entry name" value="CYTOSOL AMINOPEPTIDASE"/>
    <property type="match status" value="1"/>
</dbReference>
<dbReference type="PANTHER" id="PTHR11963">
    <property type="entry name" value="LEUCINE AMINOPEPTIDASE-RELATED"/>
    <property type="match status" value="1"/>
</dbReference>
<dbReference type="Pfam" id="PF00883">
    <property type="entry name" value="Peptidase_M17"/>
    <property type="match status" value="1"/>
</dbReference>
<dbReference type="Pfam" id="PF02789">
    <property type="entry name" value="Peptidase_M17_N"/>
    <property type="match status" value="1"/>
</dbReference>
<dbReference type="PRINTS" id="PR00481">
    <property type="entry name" value="LAMNOPPTDASE"/>
</dbReference>
<dbReference type="SUPFAM" id="SSF52949">
    <property type="entry name" value="Macro domain-like"/>
    <property type="match status" value="1"/>
</dbReference>
<dbReference type="SUPFAM" id="SSF53187">
    <property type="entry name" value="Zn-dependent exopeptidases"/>
    <property type="match status" value="1"/>
</dbReference>
<comment type="function">
    <text evidence="1 4">Presumably involved in the processing and regular turnover of intracellular proteins. Catalyzes the removal of unsubstituted N-terminal amino acids from various peptides (By similarity). Possesses Cys-Gly dipeptidase activity (PubMed:25716890).</text>
</comment>
<comment type="catalytic activity">
    <reaction>
        <text>Release of an N-terminal amino acid, Xaa-|-Yaa-, in which Xaa is preferably Leu, but may be other amino acids including Pro although not Arg or Lys, and Yaa may be Pro. Amino acid amides and methyl esters are also readily hydrolyzed, but rates on arylamides are exceedingly low.</text>
        <dbReference type="EC" id="3.4.11.1"/>
    </reaction>
</comment>
<comment type="catalytic activity">
    <reaction>
        <text>Release of N-terminal proline from a peptide.</text>
        <dbReference type="EC" id="3.4.11.5"/>
    </reaction>
</comment>
<comment type="cofactor">
    <cofactor evidence="1">
        <name>Mn(2+)</name>
        <dbReference type="ChEBI" id="CHEBI:29035"/>
    </cofactor>
    <text evidence="1">Binds 2 Mn(2+) ions per subunit.</text>
</comment>
<comment type="subunit">
    <text evidence="2">Homohexamer (dimer of homotrimers).</text>
</comment>
<comment type="subcellular location">
    <subcellularLocation>
        <location evidence="6">Plastid</location>
        <location evidence="6">Chloroplast</location>
    </subcellularLocation>
</comment>
<comment type="similarity">
    <text evidence="6">Belongs to the peptidase M17 family.</text>
</comment>
<comment type="sequence caution" evidence="6">
    <conflict type="erroneous gene model prediction">
        <sequence resource="EMBL-CDS" id="CAA18202"/>
    </conflict>
</comment>
<comment type="sequence caution" evidence="6">
    <conflict type="erroneous gene model prediction">
        <sequence resource="EMBL-CDS" id="CAB79809"/>
    </conflict>
</comment>
<protein>
    <recommendedName>
        <fullName>Leucine aminopeptidase 3, chloroplastic</fullName>
        <ecNumber>3.4.11.1</ecNumber>
    </recommendedName>
    <alternativeName>
        <fullName>Leucyl aminopeptidase 3</fullName>
        <shortName evidence="5">AtLAP3</shortName>
    </alternativeName>
    <alternativeName>
        <fullName>Proline aminopeptidase 3</fullName>
        <ecNumber>3.4.11.5</ecNumber>
    </alternativeName>
    <alternativeName>
        <fullName>Prolyl aminopeptidase 3</fullName>
    </alternativeName>
</protein>
<reference key="1">
    <citation type="journal article" date="1999" name="Nature">
        <title>Sequence and analysis of chromosome 4 of the plant Arabidopsis thaliana.</title>
        <authorList>
            <person name="Mayer K.F.X."/>
            <person name="Schueller C."/>
            <person name="Wambutt R."/>
            <person name="Murphy G."/>
            <person name="Volckaert G."/>
            <person name="Pohl T."/>
            <person name="Duesterhoeft A."/>
            <person name="Stiekema W."/>
            <person name="Entian K.-D."/>
            <person name="Terryn N."/>
            <person name="Harris B."/>
            <person name="Ansorge W."/>
            <person name="Brandt P."/>
            <person name="Grivell L.A."/>
            <person name="Rieger M."/>
            <person name="Weichselgartner M."/>
            <person name="de Simone V."/>
            <person name="Obermaier B."/>
            <person name="Mache R."/>
            <person name="Mueller M."/>
            <person name="Kreis M."/>
            <person name="Delseny M."/>
            <person name="Puigdomenech P."/>
            <person name="Watson M."/>
            <person name="Schmidtheini T."/>
            <person name="Reichert B."/>
            <person name="Portetelle D."/>
            <person name="Perez-Alonso M."/>
            <person name="Boutry M."/>
            <person name="Bancroft I."/>
            <person name="Vos P."/>
            <person name="Hoheisel J."/>
            <person name="Zimmermann W."/>
            <person name="Wedler H."/>
            <person name="Ridley P."/>
            <person name="Langham S.-A."/>
            <person name="McCullagh B."/>
            <person name="Bilham L."/>
            <person name="Robben J."/>
            <person name="van der Schueren J."/>
            <person name="Grymonprez B."/>
            <person name="Chuang Y.-J."/>
            <person name="Vandenbussche F."/>
            <person name="Braeken M."/>
            <person name="Weltjens I."/>
            <person name="Voet M."/>
            <person name="Bastiaens I."/>
            <person name="Aert R."/>
            <person name="Defoor E."/>
            <person name="Weitzenegger T."/>
            <person name="Bothe G."/>
            <person name="Ramsperger U."/>
            <person name="Hilbert H."/>
            <person name="Braun M."/>
            <person name="Holzer E."/>
            <person name="Brandt A."/>
            <person name="Peters S."/>
            <person name="van Staveren M."/>
            <person name="Dirkse W."/>
            <person name="Mooijman P."/>
            <person name="Klein Lankhorst R."/>
            <person name="Rose M."/>
            <person name="Hauf J."/>
            <person name="Koetter P."/>
            <person name="Berneiser S."/>
            <person name="Hempel S."/>
            <person name="Feldpausch M."/>
            <person name="Lamberth S."/>
            <person name="Van den Daele H."/>
            <person name="De Keyser A."/>
            <person name="Buysshaert C."/>
            <person name="Gielen J."/>
            <person name="Villarroel R."/>
            <person name="De Clercq R."/>
            <person name="van Montagu M."/>
            <person name="Rogers J."/>
            <person name="Cronin A."/>
            <person name="Quail M.A."/>
            <person name="Bray-Allen S."/>
            <person name="Clark L."/>
            <person name="Doggett J."/>
            <person name="Hall S."/>
            <person name="Kay M."/>
            <person name="Lennard N."/>
            <person name="McLay K."/>
            <person name="Mayes R."/>
            <person name="Pettett A."/>
            <person name="Rajandream M.A."/>
            <person name="Lyne M."/>
            <person name="Benes V."/>
            <person name="Rechmann S."/>
            <person name="Borkova D."/>
            <person name="Bloecker H."/>
            <person name="Scharfe M."/>
            <person name="Grimm M."/>
            <person name="Loehnert T.-H."/>
            <person name="Dose S."/>
            <person name="de Haan M."/>
            <person name="Maarse A.C."/>
            <person name="Schaefer M."/>
            <person name="Mueller-Auer S."/>
            <person name="Gabel C."/>
            <person name="Fuchs M."/>
            <person name="Fartmann B."/>
            <person name="Granderath K."/>
            <person name="Dauner D."/>
            <person name="Herzl A."/>
            <person name="Neumann S."/>
            <person name="Argiriou A."/>
            <person name="Vitale D."/>
            <person name="Liguori R."/>
            <person name="Piravandi E."/>
            <person name="Massenet O."/>
            <person name="Quigley F."/>
            <person name="Clabauld G."/>
            <person name="Muendlein A."/>
            <person name="Felber R."/>
            <person name="Schnabl S."/>
            <person name="Hiller R."/>
            <person name="Schmidt W."/>
            <person name="Lecharny A."/>
            <person name="Aubourg S."/>
            <person name="Chefdor F."/>
            <person name="Cooke R."/>
            <person name="Berger C."/>
            <person name="Monfort A."/>
            <person name="Casacuberta E."/>
            <person name="Gibbons T."/>
            <person name="Weber N."/>
            <person name="Vandenbol M."/>
            <person name="Bargues M."/>
            <person name="Terol J."/>
            <person name="Torres A."/>
            <person name="Perez-Perez A."/>
            <person name="Purnelle B."/>
            <person name="Bent E."/>
            <person name="Johnson S."/>
            <person name="Tacon D."/>
            <person name="Jesse T."/>
            <person name="Heijnen L."/>
            <person name="Schwarz S."/>
            <person name="Scholler P."/>
            <person name="Heber S."/>
            <person name="Francs P."/>
            <person name="Bielke C."/>
            <person name="Frishman D."/>
            <person name="Haase D."/>
            <person name="Lemcke K."/>
            <person name="Mewes H.-W."/>
            <person name="Stocker S."/>
            <person name="Zaccaria P."/>
            <person name="Bevan M."/>
            <person name="Wilson R.K."/>
            <person name="de la Bastide M."/>
            <person name="Habermann K."/>
            <person name="Parnell L."/>
            <person name="Dedhia N."/>
            <person name="Gnoj L."/>
            <person name="Schutz K."/>
            <person name="Huang E."/>
            <person name="Spiegel L."/>
            <person name="Sekhon M."/>
            <person name="Murray J."/>
            <person name="Sheet P."/>
            <person name="Cordes M."/>
            <person name="Abu-Threideh J."/>
            <person name="Stoneking T."/>
            <person name="Kalicki J."/>
            <person name="Graves T."/>
            <person name="Harmon G."/>
            <person name="Edwards J."/>
            <person name="Latreille P."/>
            <person name="Courtney L."/>
            <person name="Cloud J."/>
            <person name="Abbott A."/>
            <person name="Scott K."/>
            <person name="Johnson D."/>
            <person name="Minx P."/>
            <person name="Bentley D."/>
            <person name="Fulton B."/>
            <person name="Miller N."/>
            <person name="Greco T."/>
            <person name="Kemp K."/>
            <person name="Kramer J."/>
            <person name="Fulton L."/>
            <person name="Mardis E."/>
            <person name="Dante M."/>
            <person name="Pepin K."/>
            <person name="Hillier L.W."/>
            <person name="Nelson J."/>
            <person name="Spieth J."/>
            <person name="Ryan E."/>
            <person name="Andrews S."/>
            <person name="Geisel C."/>
            <person name="Layman D."/>
            <person name="Du H."/>
            <person name="Ali J."/>
            <person name="Berghoff A."/>
            <person name="Jones K."/>
            <person name="Drone K."/>
            <person name="Cotton M."/>
            <person name="Joshu C."/>
            <person name="Antonoiu B."/>
            <person name="Zidanic M."/>
            <person name="Strong C."/>
            <person name="Sun H."/>
            <person name="Lamar B."/>
            <person name="Yordan C."/>
            <person name="Ma P."/>
            <person name="Zhong J."/>
            <person name="Preston R."/>
            <person name="Vil D."/>
            <person name="Shekher M."/>
            <person name="Matero A."/>
            <person name="Shah R."/>
            <person name="Swaby I.K."/>
            <person name="O'Shaughnessy A."/>
            <person name="Rodriguez M."/>
            <person name="Hoffman J."/>
            <person name="Till S."/>
            <person name="Granat S."/>
            <person name="Shohdy N."/>
            <person name="Hasegawa A."/>
            <person name="Hameed A."/>
            <person name="Lodhi M."/>
            <person name="Johnson A."/>
            <person name="Chen E."/>
            <person name="Marra M.A."/>
            <person name="Martienssen R."/>
            <person name="McCombie W.R."/>
        </authorList>
    </citation>
    <scope>NUCLEOTIDE SEQUENCE [LARGE SCALE GENOMIC DNA]</scope>
    <source>
        <strain>cv. Columbia</strain>
    </source>
</reference>
<reference key="2">
    <citation type="journal article" date="2017" name="Plant J.">
        <title>Araport11: a complete reannotation of the Arabidopsis thaliana reference genome.</title>
        <authorList>
            <person name="Cheng C.Y."/>
            <person name="Krishnakumar V."/>
            <person name="Chan A.P."/>
            <person name="Thibaud-Nissen F."/>
            <person name="Schobel S."/>
            <person name="Town C.D."/>
        </authorList>
    </citation>
    <scope>GENOME REANNOTATION</scope>
    <source>
        <strain>cv. Columbia</strain>
    </source>
</reference>
<reference key="3">
    <citation type="journal article" date="2003" name="Science">
        <title>Empirical analysis of transcriptional activity in the Arabidopsis genome.</title>
        <authorList>
            <person name="Yamada K."/>
            <person name="Lim J."/>
            <person name="Dale J.M."/>
            <person name="Chen H."/>
            <person name="Shinn P."/>
            <person name="Palm C.J."/>
            <person name="Southwick A.M."/>
            <person name="Wu H.C."/>
            <person name="Kim C.J."/>
            <person name="Nguyen M."/>
            <person name="Pham P.K."/>
            <person name="Cheuk R.F."/>
            <person name="Karlin-Newmann G."/>
            <person name="Liu S.X."/>
            <person name="Lam B."/>
            <person name="Sakano H."/>
            <person name="Wu T."/>
            <person name="Yu G."/>
            <person name="Miranda M."/>
            <person name="Quach H.L."/>
            <person name="Tripp M."/>
            <person name="Chang C.H."/>
            <person name="Lee J.M."/>
            <person name="Toriumi M.J."/>
            <person name="Chan M.M."/>
            <person name="Tang C.C."/>
            <person name="Onodera C.S."/>
            <person name="Deng J.M."/>
            <person name="Akiyama K."/>
            <person name="Ansari Y."/>
            <person name="Arakawa T."/>
            <person name="Banh J."/>
            <person name="Banno F."/>
            <person name="Bowser L."/>
            <person name="Brooks S.Y."/>
            <person name="Carninci P."/>
            <person name="Chao Q."/>
            <person name="Choy N."/>
            <person name="Enju A."/>
            <person name="Goldsmith A.D."/>
            <person name="Gurjal M."/>
            <person name="Hansen N.F."/>
            <person name="Hayashizaki Y."/>
            <person name="Johnson-Hopson C."/>
            <person name="Hsuan V.W."/>
            <person name="Iida K."/>
            <person name="Karnes M."/>
            <person name="Khan S."/>
            <person name="Koesema E."/>
            <person name="Ishida J."/>
            <person name="Jiang P.X."/>
            <person name="Jones T."/>
            <person name="Kawai J."/>
            <person name="Kamiya A."/>
            <person name="Meyers C."/>
            <person name="Nakajima M."/>
            <person name="Narusaka M."/>
            <person name="Seki M."/>
            <person name="Sakurai T."/>
            <person name="Satou M."/>
            <person name="Tamse R."/>
            <person name="Vaysberg M."/>
            <person name="Wallender E.K."/>
            <person name="Wong C."/>
            <person name="Yamamura Y."/>
            <person name="Yuan S."/>
            <person name="Shinozaki K."/>
            <person name="Davis R.W."/>
            <person name="Theologis A."/>
            <person name="Ecker J.R."/>
        </authorList>
    </citation>
    <scope>NUCLEOTIDE SEQUENCE [LARGE SCALE MRNA]</scope>
    <source>
        <strain>cv. Columbia</strain>
    </source>
</reference>
<reference key="4">
    <citation type="journal article" date="2015" name="Biochem. J.">
        <title>Defining the cytosolic pathway of glutathione degradation in Arabidopsis thaliana: role of the ChaC/GCG family of gamma-glutamyl cyclotransferases as glutathione-degrading enzymes and AtLAP1 as the Cys-Gly peptidase.</title>
        <authorList>
            <person name="Kumar S."/>
            <person name="Kaur A."/>
            <person name="Chattopadhyay B."/>
            <person name="Bachhawat A.K."/>
        </authorList>
    </citation>
    <scope>FUNCTION</scope>
</reference>
<accession>Q8RX72</accession>
<accession>O65558</accession>
<gene>
    <name evidence="5" type="primary">LAP3</name>
    <name type="ordered locus">At4g30910</name>
    <name type="ORF">F6I18.180</name>
</gene>
<feature type="transit peptide" description="Chloroplast" evidence="3">
    <location>
        <begin position="1"/>
        <end position="50"/>
    </location>
</feature>
<feature type="chain" id="PRO_0000045811" description="Leucine aminopeptidase 3, chloroplastic">
    <location>
        <begin position="51"/>
        <end position="581"/>
    </location>
</feature>
<feature type="active site" evidence="3">
    <location>
        <position position="362"/>
    </location>
</feature>
<feature type="active site" evidence="3">
    <location>
        <position position="439"/>
    </location>
</feature>
<feature type="binding site" evidence="1">
    <location>
        <position position="350"/>
    </location>
    <ligand>
        <name>Mn(2+)</name>
        <dbReference type="ChEBI" id="CHEBI:29035"/>
        <label>1</label>
    </ligand>
</feature>
<feature type="binding site" evidence="1">
    <location>
        <position position="355"/>
    </location>
    <ligand>
        <name>Mn(2+)</name>
        <dbReference type="ChEBI" id="CHEBI:29035"/>
        <label>1</label>
    </ligand>
</feature>
<feature type="binding site" evidence="1">
    <location>
        <position position="355"/>
    </location>
    <ligand>
        <name>Mn(2+)</name>
        <dbReference type="ChEBI" id="CHEBI:29035"/>
        <label>2</label>
    </ligand>
</feature>
<feature type="binding site" evidence="1">
    <location>
        <position position="375"/>
    </location>
    <ligand>
        <name>Mn(2+)</name>
        <dbReference type="ChEBI" id="CHEBI:29035"/>
        <label>1</label>
    </ligand>
</feature>
<feature type="binding site" evidence="1">
    <location>
        <position position="435"/>
    </location>
    <ligand>
        <name>Mn(2+)</name>
        <dbReference type="ChEBI" id="CHEBI:29035"/>
        <label>2</label>
    </ligand>
</feature>
<feature type="binding site" evidence="1">
    <location>
        <position position="437"/>
    </location>
    <ligand>
        <name>Mn(2+)</name>
        <dbReference type="ChEBI" id="CHEBI:29035"/>
        <label>1</label>
    </ligand>
</feature>
<feature type="binding site" evidence="1">
    <location>
        <position position="437"/>
    </location>
    <ligand>
        <name>Mn(2+)</name>
        <dbReference type="ChEBI" id="CHEBI:29035"/>
        <label>2</label>
    </ligand>
</feature>
<sequence>MAVTLVTSCASSSRFHFRSFSSSPSSLSSCFVRFQLLSRLRVSFAITPLYCSSKATAHTIAHATLGLTQANSVDHPKISFSGKEIDVTEWKGDILAVGVTEKDMAKDANSKFENPILKKLDAHLGGLLADVSAEEDFSGKPGQSTVLRLPGLGSKRVGLIGLGKSASTPSAFQSLGEAVAAAAKASQASSVAVVLASSESFSDESKLSSASDIASGTVLGLFEDSRYKSESKKPSLKSVVFIGFGTGPELENKLKYAEHVSYGVIFTKELVNSPANVLSPAVLAEEASNLASMYSNVMTANILKEEQCKELKMGSYLAVAAASANPPHFIHLIYKPSSGPVKTKLALVGKGLTFDSGGYNIKIGPELIIELMKIDVGGSAAVLGAAKAIGEIKPPGVEVHFIVAACENMISGTGMRPGDVITASNGKTIEVNDTDSEGRLTLADALVYACNQGVDKIVDIATLTGEIIVALGPSMAGMYTASDELAKEVIAASQRSGEKLWRMPMEESYWEMMKSGVADMVNFGGRAGGSITAALFLKRFVSENVEWLHIDMAGRVWNEKKKAATGFGVATLVEWVQNNSS</sequence>
<organism>
    <name type="scientific">Arabidopsis thaliana</name>
    <name type="common">Mouse-ear cress</name>
    <dbReference type="NCBI Taxonomy" id="3702"/>
    <lineage>
        <taxon>Eukaryota</taxon>
        <taxon>Viridiplantae</taxon>
        <taxon>Streptophyta</taxon>
        <taxon>Embryophyta</taxon>
        <taxon>Tracheophyta</taxon>
        <taxon>Spermatophyta</taxon>
        <taxon>Magnoliopsida</taxon>
        <taxon>eudicotyledons</taxon>
        <taxon>Gunneridae</taxon>
        <taxon>Pentapetalae</taxon>
        <taxon>rosids</taxon>
        <taxon>malvids</taxon>
        <taxon>Brassicales</taxon>
        <taxon>Brassicaceae</taxon>
        <taxon>Camelineae</taxon>
        <taxon>Arabidopsis</taxon>
    </lineage>
</organism>
<proteinExistence type="evidence at transcript level"/>
<evidence type="ECO:0000250" key="1">
    <source>
        <dbReference type="UniProtKB" id="P30184"/>
    </source>
</evidence>
<evidence type="ECO:0000250" key="2">
    <source>
        <dbReference type="UniProtKB" id="Q10712"/>
    </source>
</evidence>
<evidence type="ECO:0000255" key="3"/>
<evidence type="ECO:0000269" key="4">
    <source>
    </source>
</evidence>
<evidence type="ECO:0000303" key="5">
    <source>
    </source>
</evidence>
<evidence type="ECO:0000305" key="6"/>
<keyword id="KW-0031">Aminopeptidase</keyword>
<keyword id="KW-0150">Chloroplast</keyword>
<keyword id="KW-0378">Hydrolase</keyword>
<keyword id="KW-0464">Manganese</keyword>
<keyword id="KW-0479">Metal-binding</keyword>
<keyword id="KW-0934">Plastid</keyword>
<keyword id="KW-0645">Protease</keyword>
<keyword id="KW-1185">Reference proteome</keyword>
<keyword id="KW-0809">Transit peptide</keyword>
<name>AMPL3_ARATH</name>